<gene>
    <name type="primary">Kiss1</name>
</gene>
<comment type="function">
    <text evidence="6 7 8 9">Metastasis suppressor protein. May regulate events downstream of cell-matrix adhesion, perhaps involving cytoskeletal reorganization. Generates a C-terminally amidated peptide, metastin which functions as the endogenous ligand of the G-protein coupled receptor GPR54. Activation of the receptor inhibits cell proliferation and cell migration, key characteristics of tumor metastasis. The receptor is also essential for normal gonadotropin-released hormone physiology and for puberty. The hypothalamic KiSS1/GPR54 system is a pivotal factor in central regulation of the gonadotropic axis at puberty and in adulthood. Intracerebroventricular administration induces an increase in serum LH and FSH levels in prepubertal male and female as well as in adult animals.</text>
</comment>
<comment type="subcellular location">
    <subcellularLocation>
        <location>Secreted</location>
    </subcellularLocation>
</comment>
<comment type="alternative products">
    <event type="alternative splicing"/>
    <isoform>
        <id>Q6Y4S4-1</id>
        <name>1</name>
        <sequence type="displayed"/>
    </isoform>
    <isoform>
        <id>Q6Y4S4-2</id>
        <name>2</name>
        <sequence type="described" ref="VSP_012957"/>
    </isoform>
</comment>
<comment type="tissue specificity">
    <text evidence="5 6">Weak in all tissue types with highest levels in lung and 15- 17-day embryos. Expressed in areas of the hypothalamus implicated in the neuroendocrine regulation of gonadotropin secretion, including the anteroventral periventricular nucleus, the periventricular nucleus, and the arcuate nucleus.</text>
</comment>
<comment type="disruption phenotype">
    <text evidence="10">Animals are viable and healthy with no apparent abnormalities but fail to undergo sexual maturation. Mutant female do not progress through the estrous cycle, have thread-like uteri and small ovaries, and do not produce mature Graffian follicles. Mutant males have small testes, and spermatogenesis arrested mainly at the early haploid spermatid stage. Both sexes have low circulating gonadotropin (LH and FSH) and sex steroid (beta-estradiol or testosterone) hormone levels. Migration of GnRH neurons into the hypothalamus appears normal with appropriate axonal connections to the median eminence and total GnRH content. The hypothalamic-pituitary axis is functional, as shown by robust LH secretion after peripheral administration of kisspeptin.</text>
</comment>
<comment type="similarity">
    <text evidence="14">Belongs to the KISS1 family.</text>
</comment>
<comment type="sequence caution" evidence="14">
    <conflict type="erroneous initiation">
        <sequence resource="EMBL-CDS" id="AAO64981"/>
    </conflict>
    <text>Extended N-terminus.</text>
</comment>
<dbReference type="EMBL" id="AF472576">
    <property type="protein sequence ID" value="AAP13356.1"/>
    <property type="molecule type" value="mRNA"/>
</dbReference>
<dbReference type="EMBL" id="AY182231">
    <property type="protein sequence ID" value="AAO64981.1"/>
    <property type="status" value="ALT_INIT"/>
    <property type="molecule type" value="mRNA"/>
</dbReference>
<dbReference type="EMBL" id="AB162440">
    <property type="protein sequence ID" value="BAD36756.1"/>
    <property type="molecule type" value="mRNA"/>
</dbReference>
<dbReference type="EMBL" id="AY707858">
    <property type="protein sequence ID" value="AAW34131.1"/>
    <property type="molecule type" value="mRNA"/>
</dbReference>
<dbReference type="EMBL" id="BC117046">
    <property type="protein sequence ID" value="AAI17047.1"/>
    <property type="molecule type" value="mRNA"/>
</dbReference>
<dbReference type="EMBL" id="BC119348">
    <property type="protein sequence ID" value="AAI19349.1"/>
    <property type="molecule type" value="mRNA"/>
</dbReference>
<dbReference type="CCDS" id="CCDS48362.1">
    <molecule id="Q6Y4S4-2"/>
</dbReference>
<dbReference type="RefSeq" id="NP_001399553.1">
    <molecule id="Q6Y4S4-2"/>
    <property type="nucleotide sequence ID" value="NM_001412624.1"/>
</dbReference>
<dbReference type="RefSeq" id="NP_839991.2">
    <molecule id="Q6Y4S4-2"/>
    <property type="nucleotide sequence ID" value="NM_178260.4"/>
</dbReference>
<dbReference type="RefSeq" id="XP_030110653.1">
    <molecule id="Q6Y4S4-2"/>
    <property type="nucleotide sequence ID" value="XM_030254793.1"/>
</dbReference>
<dbReference type="FunCoup" id="Q6Y4S4">
    <property type="interactions" value="402"/>
</dbReference>
<dbReference type="STRING" id="10090.ENSMUSP00000007433"/>
<dbReference type="iPTMnet" id="Q6Y4S4"/>
<dbReference type="PhosphoSitePlus" id="Q6Y4S4"/>
<dbReference type="ProteomicsDB" id="263550">
    <molecule id="Q6Y4S4-1"/>
</dbReference>
<dbReference type="ProteomicsDB" id="263551">
    <molecule id="Q6Y4S4-2"/>
</dbReference>
<dbReference type="DNASU" id="280287"/>
<dbReference type="Ensembl" id="ENSMUST00000178033.5">
    <molecule id="Q6Y4S4-2"/>
    <property type="protein sequence ID" value="ENSMUSP00000136746.2"/>
    <property type="gene ID" value="ENSMUSG00000116158.3"/>
</dbReference>
<dbReference type="Ensembl" id="ENSMUST00000193888.6">
    <molecule id="Q6Y4S4-2"/>
    <property type="protein sequence ID" value="ENSMUSP00000142234.2"/>
    <property type="gene ID" value="ENSMUSG00000115958.2"/>
</dbReference>
<dbReference type="Ensembl" id="ENSMUST00000194044.6">
    <molecule id="Q6Y4S4-2"/>
    <property type="protein sequence ID" value="ENSMUSP00000141501.2"/>
    <property type="gene ID" value="ENSMUSG00000115958.2"/>
</dbReference>
<dbReference type="Ensembl" id="ENSMUST00000195286.5">
    <molecule id="Q6Y4S4-2"/>
    <property type="protein sequence ID" value="ENSMUSP00000142264.2"/>
    <property type="gene ID" value="ENSMUSG00000115958.2"/>
</dbReference>
<dbReference type="GeneID" id="280287"/>
<dbReference type="KEGG" id="mmu:280287"/>
<dbReference type="AGR" id="MGI:2663985"/>
<dbReference type="CTD" id="3814"/>
<dbReference type="MGI" id="MGI:2663985">
    <property type="gene designation" value="Kiss1"/>
</dbReference>
<dbReference type="VEuPathDB" id="HostDB:ENSMUSG00000115958"/>
<dbReference type="VEuPathDB" id="HostDB:ENSMUSG00000116158"/>
<dbReference type="GeneTree" id="ENSGT00390000008827"/>
<dbReference type="HOGENOM" id="CLU_119112_0_0_1"/>
<dbReference type="InParanoid" id="Q6Y4S4"/>
<dbReference type="OMA" id="LAHLIPW"/>
<dbReference type="OrthoDB" id="9899812at2759"/>
<dbReference type="TreeFam" id="TF338233"/>
<dbReference type="Reactome" id="R-MMU-375276">
    <property type="pathway name" value="Peptide ligand-binding receptors"/>
</dbReference>
<dbReference type="Reactome" id="R-MMU-416476">
    <property type="pathway name" value="G alpha (q) signalling events"/>
</dbReference>
<dbReference type="BioGRID-ORCS" id="280287">
    <property type="hits" value="3 hits in 78 CRISPR screens"/>
</dbReference>
<dbReference type="PRO" id="PR:Q6Y4S4"/>
<dbReference type="Proteomes" id="UP000000589">
    <property type="component" value="Chromosome 1"/>
</dbReference>
<dbReference type="RNAct" id="Q6Y4S4">
    <property type="molecule type" value="protein"/>
</dbReference>
<dbReference type="Bgee" id="ENSMUSG00000115958">
    <property type="expression patterns" value="Expressed in blastoderm cell in morula and 15 other cell types or tissues"/>
</dbReference>
<dbReference type="ExpressionAtlas" id="Q6Y4S4">
    <property type="expression patterns" value="baseline and differential"/>
</dbReference>
<dbReference type="GO" id="GO:0005576">
    <property type="term" value="C:extracellular region"/>
    <property type="evidence" value="ECO:0007669"/>
    <property type="project" value="UniProtKB-SubCell"/>
</dbReference>
<dbReference type="GO" id="GO:0046697">
    <property type="term" value="P:decidualization"/>
    <property type="evidence" value="ECO:0000315"/>
    <property type="project" value="MGI"/>
</dbReference>
<dbReference type="GO" id="GO:0007186">
    <property type="term" value="P:G protein-coupled receptor signaling pathway"/>
    <property type="evidence" value="ECO:0000314"/>
    <property type="project" value="MGI"/>
</dbReference>
<dbReference type="InterPro" id="IPR020207">
    <property type="entry name" value="Metastasis-suppressor_KiSS-1"/>
</dbReference>
<dbReference type="PANTHER" id="PTHR16955">
    <property type="entry name" value="METASTASIS-SUPPRESSOR KISS-1"/>
    <property type="match status" value="1"/>
</dbReference>
<dbReference type="PANTHER" id="PTHR16955:SF6">
    <property type="entry name" value="METASTASIS-SUPPRESSOR KISS-1"/>
    <property type="match status" value="1"/>
</dbReference>
<dbReference type="Pfam" id="PF15152">
    <property type="entry name" value="Kisspeptin"/>
    <property type="match status" value="1"/>
</dbReference>
<feature type="signal peptide" evidence="3">
    <location>
        <begin position="1"/>
        <end position="19"/>
    </location>
</feature>
<feature type="chain" id="PRO_0000021552" description="Metastasis-suppressor KiSS-1">
    <location>
        <begin position="20"/>
        <end position="130"/>
    </location>
</feature>
<feature type="peptide" id="PRO_0000021553" description="Metastin">
    <location>
        <begin position="68"/>
        <end position="119"/>
    </location>
</feature>
<feature type="peptide" id="PRO_0000021554" description="Kisspeptin-10">
    <location>
        <begin position="110"/>
        <end position="119"/>
    </location>
</feature>
<feature type="region of interest" description="Disordered" evidence="4">
    <location>
        <begin position="49"/>
        <end position="82"/>
    </location>
</feature>
<feature type="region of interest" description="Essential for receptor binding and receptor activation">
    <location>
        <begin position="110"/>
        <end position="119"/>
    </location>
</feature>
<feature type="modified residue" description="Phosphotyrosine" evidence="2">
    <location>
        <position position="110"/>
    </location>
</feature>
<feature type="modified residue" description="Tyrosine amide" evidence="1">
    <location>
        <position position="119"/>
    </location>
</feature>
<feature type="disulfide bond" evidence="3">
    <location>
        <begin position="71"/>
        <end position="85"/>
    </location>
</feature>
<feature type="splice variant" id="VSP_012957" description="In isoform 2." evidence="11 12 13">
    <location>
        <begin position="25"/>
        <end position="28"/>
    </location>
</feature>
<keyword id="KW-0025">Alternative splicing</keyword>
<keyword id="KW-0027">Amidation</keyword>
<keyword id="KW-0165">Cleavage on pair of basic residues</keyword>
<keyword id="KW-1015">Disulfide bond</keyword>
<keyword id="KW-0597">Phosphoprotein</keyword>
<keyword id="KW-1185">Reference proteome</keyword>
<keyword id="KW-0964">Secreted</keyword>
<keyword id="KW-0732">Signal</keyword>
<accession>Q6Y4S4</accession>
<accession>Q149Z8</accession>
<accession>Q68Y93</accession>
<accession>Q80XF6</accession>
<name>KISS1_MOUSE</name>
<evidence type="ECO:0000250" key="1"/>
<evidence type="ECO:0000250" key="2">
    <source>
        <dbReference type="UniProtKB" id="Q15726"/>
    </source>
</evidence>
<evidence type="ECO:0000255" key="3"/>
<evidence type="ECO:0000256" key="4">
    <source>
        <dbReference type="SAM" id="MobiDB-lite"/>
    </source>
</evidence>
<evidence type="ECO:0000269" key="5">
    <source>
    </source>
</evidence>
<evidence type="ECO:0000269" key="6">
    <source>
    </source>
</evidence>
<evidence type="ECO:0000269" key="7">
    <source>
    </source>
</evidence>
<evidence type="ECO:0000269" key="8">
    <source>
    </source>
</evidence>
<evidence type="ECO:0000269" key="9">
    <source>
    </source>
</evidence>
<evidence type="ECO:0000269" key="10">
    <source>
    </source>
</evidence>
<evidence type="ECO:0000303" key="11">
    <source>
    </source>
</evidence>
<evidence type="ECO:0000303" key="12">
    <source ref="3"/>
</evidence>
<evidence type="ECO:0000303" key="13">
    <source ref="4"/>
</evidence>
<evidence type="ECO:0000305" key="14"/>
<proteinExistence type="evidence at protein level"/>
<organism>
    <name type="scientific">Mus musculus</name>
    <name type="common">Mouse</name>
    <dbReference type="NCBI Taxonomy" id="10090"/>
    <lineage>
        <taxon>Eukaryota</taxon>
        <taxon>Metazoa</taxon>
        <taxon>Chordata</taxon>
        <taxon>Craniata</taxon>
        <taxon>Vertebrata</taxon>
        <taxon>Euteleostomi</taxon>
        <taxon>Mammalia</taxon>
        <taxon>Eutheria</taxon>
        <taxon>Euarchontoglires</taxon>
        <taxon>Glires</taxon>
        <taxon>Rodentia</taxon>
        <taxon>Myomorpha</taxon>
        <taxon>Muroidea</taxon>
        <taxon>Muridae</taxon>
        <taxon>Murinae</taxon>
        <taxon>Mus</taxon>
        <taxon>Mus</taxon>
    </lineage>
</organism>
<protein>
    <recommendedName>
        <fullName>Metastasis-suppressor KiSS-1</fullName>
    </recommendedName>
    <alternativeName>
        <fullName>Kisspeptin-1</fullName>
    </alternativeName>
    <component>
        <recommendedName>
            <fullName>Metastin</fullName>
        </recommendedName>
        <alternativeName>
            <fullName>Kisspeptin-52</fullName>
        </alternativeName>
    </component>
    <component>
        <recommendedName>
            <fullName>Kisspeptin-10</fullName>
        </recommendedName>
        <alternativeName>
            <fullName>Metastin45-54</fullName>
        </alternativeName>
    </component>
</protein>
<reference key="1">
    <citation type="journal article" date="2002" name="Cancer Res.">
        <title>Identification and characterization of mouse metastasis-suppressor KiSS1 and its G-protein-coupled receptor.</title>
        <authorList>
            <person name="Stafford L.J."/>
            <person name="Xia C."/>
            <person name="Ma W."/>
            <person name="Cai Y."/>
            <person name="Liu M."/>
        </authorList>
    </citation>
    <scope>NUCLEOTIDE SEQUENCE [MRNA] (ISOFORM 1)</scope>
    <scope>CHARACTERIZATION</scope>
    <scope>TISSUE SPECIFICITY</scope>
    <source>
        <strain>129S6/SvEvTac</strain>
        <tissue>Brain</tissue>
    </source>
</reference>
<reference key="2">
    <citation type="journal article" date="2004" name="Biochim. Biophys. Acta">
        <title>Expression of KiSS-1, a metastasis suppressor gene, in trophoblast giant cells of the rat placenta.</title>
        <authorList>
            <person name="Terao Y."/>
            <person name="Kumano S."/>
            <person name="Takatsu Y."/>
            <person name="Hattori M."/>
            <person name="Nishimura A."/>
            <person name="Ohtaki T."/>
            <person name="Shintani Y."/>
        </authorList>
    </citation>
    <scope>NUCLEOTIDE SEQUENCE [MRNA] (ISOFORMS 1 AND 2)</scope>
    <source>
        <tissue>Embryo</tissue>
    </source>
</reference>
<reference key="3">
    <citation type="submission" date="2004-02" db="EMBL/GenBank/DDBJ databases">
        <title>Identification and characterization of metastin in the mouse spinal cord.</title>
        <authorList>
            <person name="Ohsawa M."/>
            <person name="Chi M."/>
            <person name="Ohtsubo Y."/>
            <person name="Brailoiu G.C."/>
            <person name="Yang J."/>
            <person name="Chang J."/>
            <person name="Dun N.J."/>
        </authorList>
    </citation>
    <scope>NUCLEOTIDE SEQUENCE [MRNA] (ISOFORM 2)</scope>
    <source>
        <strain>ICR</strain>
        <tissue>Brain</tissue>
    </source>
</reference>
<reference key="4">
    <citation type="submission" date="2004-08" db="EMBL/GenBank/DDBJ databases">
        <title>The genesis of the human KISS1.</title>
        <authorList>
            <person name="Xie H."/>
            <person name="Bonaldo M.F."/>
            <person name="Soares M.B."/>
        </authorList>
    </citation>
    <scope>NUCLEOTIDE SEQUENCE [MRNA] (ISOFORM 2)</scope>
    <source>
        <strain>C57BL/6J</strain>
        <tissue>Placenta</tissue>
    </source>
</reference>
<reference key="5">
    <citation type="journal article" date="2004" name="Genome Res.">
        <title>The status, quality, and expansion of the NIH full-length cDNA project: the Mammalian Gene Collection (MGC).</title>
        <authorList>
            <consortium name="The MGC Project Team"/>
        </authorList>
    </citation>
    <scope>NUCLEOTIDE SEQUENCE [LARGE SCALE MRNA] (ISOFORM 1)</scope>
    <source>
        <tissue>Brain</tissue>
    </source>
</reference>
<reference key="6">
    <citation type="journal article" date="2004" name="Endocrinology">
        <title>A role for kisspeptins in the regulation of gonadotropin secretion in the mouse.</title>
        <authorList>
            <person name="Gottsch M.L."/>
            <person name="Cunningham M.J."/>
            <person name="Smith J.T."/>
            <person name="Popa S.M."/>
            <person name="Acohido B.V."/>
            <person name="Crowley W.F."/>
            <person name="Seminara S."/>
            <person name="Clifton D.K."/>
            <person name="Steiner R.A."/>
        </authorList>
    </citation>
    <scope>TISSUE SPECIFICITY</scope>
    <scope>ROLE IN THE REGULATION OF GONADOTROPIN SECRETION</scope>
</reference>
<reference key="7">
    <citation type="journal article" date="2004" name="Neuroendocrinology">
        <title>Kisspeptin activation of gonadotropin releasing hormone neurons and regulation of KiSS-1 mRNA in the male rat.</title>
        <authorList>
            <person name="Irwig M.S."/>
            <person name="Fraley G.S."/>
            <person name="Smith J.T."/>
            <person name="Acohido B.V."/>
            <person name="Popa S.M."/>
            <person name="Cunningham M.J."/>
            <person name="Gottsch M.L."/>
            <person name="Clifton D.K."/>
            <person name="Steiner R.A."/>
        </authorList>
    </citation>
    <scope>INVOLVEMENT IN REGULATION OF GONADOTROPIN SECRETION</scope>
</reference>
<reference key="8">
    <citation type="journal article" date="2004" name="J. Physiol. (Lond.)">
        <title>Advanced vaginal opening and precocious activation of the reproductive axis by KiSS-1 peptide, the endogenous ligand of GPR54.</title>
        <authorList>
            <person name="Navarro V.M."/>
            <person name="Fernandez-Fernandez R."/>
            <person name="Castellano J.M."/>
            <person name="Roa J."/>
            <person name="Mayen A."/>
            <person name="Barreiro M.L."/>
            <person name="Gaytan F."/>
            <person name="Aguilar E."/>
            <person name="Pinilla L."/>
            <person name="Dieguez C."/>
            <person name="Tena-Sempere M."/>
        </authorList>
    </citation>
    <scope>FUNCTION</scope>
</reference>
<reference key="9">
    <citation type="journal article" date="2005" name="Endocrinology">
        <title>Characterization of the potent luteinizing hormone-releasing activity of KiSS-1 peptide, the natural ligand of GPR54.</title>
        <authorList>
            <person name="Navarro V.M."/>
            <person name="Castellano J.M."/>
            <person name="Fernandez-Fernandez R."/>
            <person name="Tovar S."/>
            <person name="Roa J."/>
            <person name="Mayen A."/>
            <person name="Nogueiras R."/>
            <person name="Vazquez M.J."/>
            <person name="Barreiro M.L."/>
            <person name="Magni P."/>
            <person name="Aguilar E."/>
            <person name="Dieguez C."/>
            <person name="Pinilla L."/>
            <person name="Tena-Sempere M."/>
        </authorList>
    </citation>
    <scope>ROLE IN LUTEINIZING HORMONE SECRETION</scope>
</reference>
<reference key="10">
    <citation type="journal article" date="2005" name="Proc. Natl. Acad. Sci. U.S.A.">
        <title>Kisspeptin directly stimulates gonadotropin-releasing hormone release via G protein-coupled receptor 54.</title>
        <authorList>
            <person name="Messager S."/>
            <person name="Chatzidaki E.E."/>
            <person name="Ma D."/>
            <person name="Hendrick A.G."/>
            <person name="Zahn D."/>
            <person name="Dixon J."/>
            <person name="Thresher R.R."/>
            <person name="Malinge I."/>
            <person name="Lomet D."/>
            <person name="Carlton M.B."/>
            <person name="Colledge W.H."/>
            <person name="Caraty A."/>
            <person name="Aparicio S.A.J.R."/>
        </authorList>
    </citation>
    <scope>DIRECT STIMULATION OF GONADOTROPIN-RELEASING HORMONE RELEASE</scope>
</reference>
<reference key="11">
    <citation type="journal article" date="2005" name="Endocrinology">
        <title>Effects of KiSS-1 peptide, the natural ligand of GPR54, on follicle-stimulating hormone secretion in the rat.</title>
        <authorList>
            <person name="Navarro V.M."/>
            <person name="Castellano J.M."/>
            <person name="Fernandez-Fernandez R."/>
            <person name="Tovar S."/>
            <person name="Roa J."/>
            <person name="Mayen A."/>
            <person name="Barreiro M.L."/>
            <person name="Casanueva F.F."/>
            <person name="Aguilar E."/>
            <person name="Dieguez C."/>
            <person name="Pinilla L."/>
            <person name="Tena-Sempere M."/>
        </authorList>
    </citation>
    <scope>ROLE IN FOLLICLE-STIMULATING HORMONE SECRETION</scope>
</reference>
<reference key="12">
    <citation type="journal article" date="2007" name="Proc. Natl. Acad. Sci. U.S.A.">
        <title>Hypogonadotropic hypogonadism in mice lacking a functional Kiss1 gene.</title>
        <authorList>
            <person name="d'Anglemont de Tassigny X."/>
            <person name="Fagg L.A."/>
            <person name="Dixon J.P."/>
            <person name="Day K."/>
            <person name="Leitch H.G."/>
            <person name="Hendrick A.G."/>
            <person name="Zahn D."/>
            <person name="Franceschini I."/>
            <person name="Caraty A."/>
            <person name="Carlton M.B."/>
            <person name="Aparicio S.A."/>
            <person name="Colledge W.H."/>
        </authorList>
    </citation>
    <scope>DISRUPTION PHENOTYPE</scope>
</reference>
<sequence length="130" mass="14117">MISMASWQLLLLLCVATYGEPLAKVAPLVKPGSTGQQSGPQELVNAWEKESRYAESKPGSAGLRARRSSPCPPVEGPAGRQRPLCASRSRLIPAPRGAVLVQREKDLSTYNWNSFGLRYGRRQAARAARG</sequence>